<gene>
    <name evidence="1" type="primary">thrS</name>
    <name type="ordered locus">XAC2594</name>
</gene>
<keyword id="KW-0030">Aminoacyl-tRNA synthetase</keyword>
<keyword id="KW-0067">ATP-binding</keyword>
<keyword id="KW-0963">Cytoplasm</keyword>
<keyword id="KW-0436">Ligase</keyword>
<keyword id="KW-0479">Metal-binding</keyword>
<keyword id="KW-0547">Nucleotide-binding</keyword>
<keyword id="KW-0648">Protein biosynthesis</keyword>
<keyword id="KW-0694">RNA-binding</keyword>
<keyword id="KW-0820">tRNA-binding</keyword>
<keyword id="KW-0862">Zinc</keyword>
<evidence type="ECO:0000255" key="1">
    <source>
        <dbReference type="HAMAP-Rule" id="MF_00184"/>
    </source>
</evidence>
<evidence type="ECO:0000255" key="2">
    <source>
        <dbReference type="PROSITE-ProRule" id="PRU01228"/>
    </source>
</evidence>
<comment type="function">
    <text evidence="1">Catalyzes the attachment of threonine to tRNA(Thr) in a two-step reaction: L-threonine is first activated by ATP to form Thr-AMP and then transferred to the acceptor end of tRNA(Thr). Also edits incorrectly charged L-seryl-tRNA(Thr).</text>
</comment>
<comment type="catalytic activity">
    <reaction evidence="1">
        <text>tRNA(Thr) + L-threonine + ATP = L-threonyl-tRNA(Thr) + AMP + diphosphate + H(+)</text>
        <dbReference type="Rhea" id="RHEA:24624"/>
        <dbReference type="Rhea" id="RHEA-COMP:9670"/>
        <dbReference type="Rhea" id="RHEA-COMP:9704"/>
        <dbReference type="ChEBI" id="CHEBI:15378"/>
        <dbReference type="ChEBI" id="CHEBI:30616"/>
        <dbReference type="ChEBI" id="CHEBI:33019"/>
        <dbReference type="ChEBI" id="CHEBI:57926"/>
        <dbReference type="ChEBI" id="CHEBI:78442"/>
        <dbReference type="ChEBI" id="CHEBI:78534"/>
        <dbReference type="ChEBI" id="CHEBI:456215"/>
        <dbReference type="EC" id="6.1.1.3"/>
    </reaction>
</comment>
<comment type="cofactor">
    <cofactor evidence="1">
        <name>Zn(2+)</name>
        <dbReference type="ChEBI" id="CHEBI:29105"/>
    </cofactor>
    <text evidence="1">Binds 1 zinc ion per subunit.</text>
</comment>
<comment type="subunit">
    <text evidence="1">Homodimer.</text>
</comment>
<comment type="subcellular location">
    <subcellularLocation>
        <location evidence="1">Cytoplasm</location>
    </subcellularLocation>
</comment>
<comment type="similarity">
    <text evidence="1">Belongs to the class-II aminoacyl-tRNA synthetase family.</text>
</comment>
<reference key="1">
    <citation type="journal article" date="2002" name="Nature">
        <title>Comparison of the genomes of two Xanthomonas pathogens with differing host specificities.</title>
        <authorList>
            <person name="da Silva A.C.R."/>
            <person name="Ferro J.A."/>
            <person name="Reinach F.C."/>
            <person name="Farah C.S."/>
            <person name="Furlan L.R."/>
            <person name="Quaggio R.B."/>
            <person name="Monteiro-Vitorello C.B."/>
            <person name="Van Sluys M.A."/>
            <person name="Almeida N.F. Jr."/>
            <person name="Alves L.M.C."/>
            <person name="do Amaral A.M."/>
            <person name="Bertolini M.C."/>
            <person name="Camargo L.E.A."/>
            <person name="Camarotte G."/>
            <person name="Cannavan F."/>
            <person name="Cardozo J."/>
            <person name="Chambergo F."/>
            <person name="Ciapina L.P."/>
            <person name="Cicarelli R.M.B."/>
            <person name="Coutinho L.L."/>
            <person name="Cursino-Santos J.R."/>
            <person name="El-Dorry H."/>
            <person name="Faria J.B."/>
            <person name="Ferreira A.J.S."/>
            <person name="Ferreira R.C.C."/>
            <person name="Ferro M.I.T."/>
            <person name="Formighieri E.F."/>
            <person name="Franco M.C."/>
            <person name="Greggio C.C."/>
            <person name="Gruber A."/>
            <person name="Katsuyama A.M."/>
            <person name="Kishi L.T."/>
            <person name="Leite R.P."/>
            <person name="Lemos E.G.M."/>
            <person name="Lemos M.V.F."/>
            <person name="Locali E.C."/>
            <person name="Machado M.A."/>
            <person name="Madeira A.M.B.N."/>
            <person name="Martinez-Rossi N.M."/>
            <person name="Martins E.C."/>
            <person name="Meidanis J."/>
            <person name="Menck C.F.M."/>
            <person name="Miyaki C.Y."/>
            <person name="Moon D.H."/>
            <person name="Moreira L.M."/>
            <person name="Novo M.T.M."/>
            <person name="Okura V.K."/>
            <person name="Oliveira M.C."/>
            <person name="Oliveira V.R."/>
            <person name="Pereira H.A."/>
            <person name="Rossi A."/>
            <person name="Sena J.A.D."/>
            <person name="Silva C."/>
            <person name="de Souza R.F."/>
            <person name="Spinola L.A.F."/>
            <person name="Takita M.A."/>
            <person name="Tamura R.E."/>
            <person name="Teixeira E.C."/>
            <person name="Tezza R.I.D."/>
            <person name="Trindade dos Santos M."/>
            <person name="Truffi D."/>
            <person name="Tsai S.M."/>
            <person name="White F.F."/>
            <person name="Setubal J.C."/>
            <person name="Kitajima J.P."/>
        </authorList>
    </citation>
    <scope>NUCLEOTIDE SEQUENCE [LARGE SCALE GENOMIC DNA]</scope>
    <source>
        <strain>306</strain>
    </source>
</reference>
<feature type="chain" id="PRO_0000101089" description="Threonine--tRNA ligase">
    <location>
        <begin position="1"/>
        <end position="634"/>
    </location>
</feature>
<feature type="domain" description="TGS" evidence="2">
    <location>
        <begin position="1"/>
        <end position="61"/>
    </location>
</feature>
<feature type="region of interest" description="Catalytic" evidence="1">
    <location>
        <begin position="243"/>
        <end position="534"/>
    </location>
</feature>
<feature type="binding site" evidence="1">
    <location>
        <position position="334"/>
    </location>
    <ligand>
        <name>Zn(2+)</name>
        <dbReference type="ChEBI" id="CHEBI:29105"/>
    </ligand>
</feature>
<feature type="binding site" evidence="1">
    <location>
        <position position="385"/>
    </location>
    <ligand>
        <name>Zn(2+)</name>
        <dbReference type="ChEBI" id="CHEBI:29105"/>
    </ligand>
</feature>
<feature type="binding site" evidence="1">
    <location>
        <position position="511"/>
    </location>
    <ligand>
        <name>Zn(2+)</name>
        <dbReference type="ChEBI" id="CHEBI:29105"/>
    </ligand>
</feature>
<accession>Q8PJE1</accession>
<sequence>MINITLPDGSRREFESPVSVMQVAQSIGAGLAKATIAGQVDGQLVDASDVIDHDASLRIITAKDAEGVEIIRHSCAHLVGHAVKQLYPEVKMVIGPVIAEGFYYDIYSERPFTPEDMAAIEQRMQELIAQDYDVIKKVTPRAEVIEVFAQRGEEYKLRLIEDMSEDITAMGLYYHQEYVDMCRGPHVPNTRFLKAFKLTRISGAYWRGDAKNEQLQRIYGTAWADKKQLDAYILRMEEADKRDHRRIGKAQDLFHLQEEAPGLVFWHPKGWSLWQVVEQYMRKVYRDSGYGEVRCPQILDVSLWQKSGHWDNYQDAMFFTESEKRTYAVKPMNCPGHVQVFNQGLHSYRDLPIRYGEFGACHRNEPSGALHGILRVRGFTQDDGHVFCLEPQIESEVTAFHQQALAVYTAFGFDDIQIKIALRPEKRLGDDATWDKAEAALRSALGVCGVEWQELPGEGAFYGPKIEYHLKDAIGRTWQLGTMQVDFMMPGRLGAEYVDENSQKKHPVMLHRAIVGSMERFIGILIEHHAGAFPSWLAPVQVVVANITDAQAEYVDSVRKTLANQGFRVSADLRNEKIGYKIREHTLQRVPYLLVVGDREKENGAVAVRTRSGEDLGTMTVSAFIERLQAEQAA</sequence>
<proteinExistence type="inferred from homology"/>
<protein>
    <recommendedName>
        <fullName evidence="1">Threonine--tRNA ligase</fullName>
        <ecNumber evidence="1">6.1.1.3</ecNumber>
    </recommendedName>
    <alternativeName>
        <fullName evidence="1">Threonyl-tRNA synthetase</fullName>
        <shortName evidence="1">ThrRS</shortName>
    </alternativeName>
</protein>
<dbReference type="EC" id="6.1.1.3" evidence="1"/>
<dbReference type="EMBL" id="AE008923">
    <property type="protein sequence ID" value="AAM37443.1"/>
    <property type="molecule type" value="Genomic_DNA"/>
</dbReference>
<dbReference type="RefSeq" id="WP_011051693.1">
    <property type="nucleotide sequence ID" value="NC_003919.1"/>
</dbReference>
<dbReference type="SMR" id="Q8PJE1"/>
<dbReference type="GeneID" id="66911702"/>
<dbReference type="KEGG" id="xac:XAC2594"/>
<dbReference type="eggNOG" id="COG0441">
    <property type="taxonomic scope" value="Bacteria"/>
</dbReference>
<dbReference type="HOGENOM" id="CLU_008554_0_1_6"/>
<dbReference type="Proteomes" id="UP000000576">
    <property type="component" value="Chromosome"/>
</dbReference>
<dbReference type="GO" id="GO:0005829">
    <property type="term" value="C:cytosol"/>
    <property type="evidence" value="ECO:0007669"/>
    <property type="project" value="TreeGrafter"/>
</dbReference>
<dbReference type="GO" id="GO:0005524">
    <property type="term" value="F:ATP binding"/>
    <property type="evidence" value="ECO:0007669"/>
    <property type="project" value="UniProtKB-UniRule"/>
</dbReference>
<dbReference type="GO" id="GO:0046872">
    <property type="term" value="F:metal ion binding"/>
    <property type="evidence" value="ECO:0007669"/>
    <property type="project" value="UniProtKB-KW"/>
</dbReference>
<dbReference type="GO" id="GO:0004829">
    <property type="term" value="F:threonine-tRNA ligase activity"/>
    <property type="evidence" value="ECO:0007669"/>
    <property type="project" value="UniProtKB-UniRule"/>
</dbReference>
<dbReference type="GO" id="GO:0000049">
    <property type="term" value="F:tRNA binding"/>
    <property type="evidence" value="ECO:0007669"/>
    <property type="project" value="UniProtKB-KW"/>
</dbReference>
<dbReference type="GO" id="GO:0006435">
    <property type="term" value="P:threonyl-tRNA aminoacylation"/>
    <property type="evidence" value="ECO:0007669"/>
    <property type="project" value="UniProtKB-UniRule"/>
</dbReference>
<dbReference type="CDD" id="cd01667">
    <property type="entry name" value="TGS_ThrRS"/>
    <property type="match status" value="1"/>
</dbReference>
<dbReference type="CDD" id="cd00860">
    <property type="entry name" value="ThrRS_anticodon"/>
    <property type="match status" value="1"/>
</dbReference>
<dbReference type="CDD" id="cd00771">
    <property type="entry name" value="ThrRS_core"/>
    <property type="match status" value="1"/>
</dbReference>
<dbReference type="FunFam" id="3.10.20.30:FF:000005">
    <property type="entry name" value="Threonine--tRNA ligase"/>
    <property type="match status" value="1"/>
</dbReference>
<dbReference type="FunFam" id="3.30.54.20:FF:000002">
    <property type="entry name" value="Threonine--tRNA ligase"/>
    <property type="match status" value="1"/>
</dbReference>
<dbReference type="FunFam" id="3.30.930.10:FF:000002">
    <property type="entry name" value="Threonine--tRNA ligase"/>
    <property type="match status" value="1"/>
</dbReference>
<dbReference type="FunFam" id="3.40.50.800:FF:000001">
    <property type="entry name" value="Threonine--tRNA ligase"/>
    <property type="match status" value="1"/>
</dbReference>
<dbReference type="FunFam" id="3.30.980.10:FF:000005">
    <property type="entry name" value="Threonyl-tRNA synthetase, mitochondrial"/>
    <property type="match status" value="1"/>
</dbReference>
<dbReference type="Gene3D" id="3.10.20.30">
    <property type="match status" value="1"/>
</dbReference>
<dbReference type="Gene3D" id="3.30.54.20">
    <property type="match status" value="1"/>
</dbReference>
<dbReference type="Gene3D" id="3.40.50.800">
    <property type="entry name" value="Anticodon-binding domain"/>
    <property type="match status" value="1"/>
</dbReference>
<dbReference type="Gene3D" id="3.30.930.10">
    <property type="entry name" value="Bira Bifunctional Protein, Domain 2"/>
    <property type="match status" value="1"/>
</dbReference>
<dbReference type="Gene3D" id="3.30.980.10">
    <property type="entry name" value="Threonyl-trna Synthetase, Chain A, domain 2"/>
    <property type="match status" value="1"/>
</dbReference>
<dbReference type="HAMAP" id="MF_00184">
    <property type="entry name" value="Thr_tRNA_synth"/>
    <property type="match status" value="1"/>
</dbReference>
<dbReference type="InterPro" id="IPR002314">
    <property type="entry name" value="aa-tRNA-synt_IIb"/>
</dbReference>
<dbReference type="InterPro" id="IPR006195">
    <property type="entry name" value="aa-tRNA-synth_II"/>
</dbReference>
<dbReference type="InterPro" id="IPR045864">
    <property type="entry name" value="aa-tRNA-synth_II/BPL/LPL"/>
</dbReference>
<dbReference type="InterPro" id="IPR004154">
    <property type="entry name" value="Anticodon-bd"/>
</dbReference>
<dbReference type="InterPro" id="IPR036621">
    <property type="entry name" value="Anticodon-bd_dom_sf"/>
</dbReference>
<dbReference type="InterPro" id="IPR012675">
    <property type="entry name" value="Beta-grasp_dom_sf"/>
</dbReference>
<dbReference type="InterPro" id="IPR004095">
    <property type="entry name" value="TGS"/>
</dbReference>
<dbReference type="InterPro" id="IPR012676">
    <property type="entry name" value="TGS-like"/>
</dbReference>
<dbReference type="InterPro" id="IPR002320">
    <property type="entry name" value="Thr-tRNA-ligase_IIa"/>
</dbReference>
<dbReference type="InterPro" id="IPR018163">
    <property type="entry name" value="Thr/Ala-tRNA-synth_IIc_edit"/>
</dbReference>
<dbReference type="InterPro" id="IPR047246">
    <property type="entry name" value="ThrRS_anticodon"/>
</dbReference>
<dbReference type="InterPro" id="IPR033728">
    <property type="entry name" value="ThrRS_core"/>
</dbReference>
<dbReference type="InterPro" id="IPR012947">
    <property type="entry name" value="tRNA_SAD"/>
</dbReference>
<dbReference type="NCBIfam" id="TIGR00418">
    <property type="entry name" value="thrS"/>
    <property type="match status" value="1"/>
</dbReference>
<dbReference type="PANTHER" id="PTHR11451:SF44">
    <property type="entry name" value="THREONINE--TRNA LIGASE, CHLOROPLASTIC_MITOCHONDRIAL 2"/>
    <property type="match status" value="1"/>
</dbReference>
<dbReference type="PANTHER" id="PTHR11451">
    <property type="entry name" value="THREONINE-TRNA LIGASE"/>
    <property type="match status" value="1"/>
</dbReference>
<dbReference type="Pfam" id="PF03129">
    <property type="entry name" value="HGTP_anticodon"/>
    <property type="match status" value="1"/>
</dbReference>
<dbReference type="Pfam" id="PF02824">
    <property type="entry name" value="TGS"/>
    <property type="match status" value="1"/>
</dbReference>
<dbReference type="Pfam" id="PF00587">
    <property type="entry name" value="tRNA-synt_2b"/>
    <property type="match status" value="1"/>
</dbReference>
<dbReference type="Pfam" id="PF07973">
    <property type="entry name" value="tRNA_SAD"/>
    <property type="match status" value="1"/>
</dbReference>
<dbReference type="PRINTS" id="PR01047">
    <property type="entry name" value="TRNASYNTHTHR"/>
</dbReference>
<dbReference type="SMART" id="SM00863">
    <property type="entry name" value="tRNA_SAD"/>
    <property type="match status" value="1"/>
</dbReference>
<dbReference type="SUPFAM" id="SSF52954">
    <property type="entry name" value="Class II aaRS ABD-related"/>
    <property type="match status" value="1"/>
</dbReference>
<dbReference type="SUPFAM" id="SSF55681">
    <property type="entry name" value="Class II aaRS and biotin synthetases"/>
    <property type="match status" value="1"/>
</dbReference>
<dbReference type="SUPFAM" id="SSF81271">
    <property type="entry name" value="TGS-like"/>
    <property type="match status" value="1"/>
</dbReference>
<dbReference type="SUPFAM" id="SSF55186">
    <property type="entry name" value="ThrRS/AlaRS common domain"/>
    <property type="match status" value="1"/>
</dbReference>
<dbReference type="PROSITE" id="PS50862">
    <property type="entry name" value="AA_TRNA_LIGASE_II"/>
    <property type="match status" value="1"/>
</dbReference>
<dbReference type="PROSITE" id="PS51880">
    <property type="entry name" value="TGS"/>
    <property type="match status" value="1"/>
</dbReference>
<name>SYT_XANAC</name>
<organism>
    <name type="scientific">Xanthomonas axonopodis pv. citri (strain 306)</name>
    <dbReference type="NCBI Taxonomy" id="190486"/>
    <lineage>
        <taxon>Bacteria</taxon>
        <taxon>Pseudomonadati</taxon>
        <taxon>Pseudomonadota</taxon>
        <taxon>Gammaproteobacteria</taxon>
        <taxon>Lysobacterales</taxon>
        <taxon>Lysobacteraceae</taxon>
        <taxon>Xanthomonas</taxon>
    </lineage>
</organism>